<dbReference type="EC" id="7.1.1.2"/>
<dbReference type="EMBL" id="Y15192">
    <property type="protein sequence ID" value="CAA75491.2"/>
    <property type="status" value="ALT_INIT"/>
    <property type="molecule type" value="Genomic_DNA"/>
</dbReference>
<dbReference type="EMBL" id="AJ404477">
    <property type="protein sequence ID" value="CAC20660.1"/>
    <property type="molecule type" value="Genomic_DNA"/>
</dbReference>
<dbReference type="RefSeq" id="NP_073284.1">
    <property type="nucleotide sequence ID" value="NC_002639.1"/>
</dbReference>
<dbReference type="SMR" id="Q9G2W7"/>
<dbReference type="GeneID" id="802351"/>
<dbReference type="CTD" id="4541"/>
<dbReference type="GO" id="GO:0031966">
    <property type="term" value="C:mitochondrial membrane"/>
    <property type="evidence" value="ECO:0007669"/>
    <property type="project" value="UniProtKB-SubCell"/>
</dbReference>
<dbReference type="GO" id="GO:0008137">
    <property type="term" value="F:NADH dehydrogenase (ubiquinone) activity"/>
    <property type="evidence" value="ECO:0007669"/>
    <property type="project" value="UniProtKB-EC"/>
</dbReference>
<dbReference type="InterPro" id="IPR050269">
    <property type="entry name" value="ComplexI_Subunit6"/>
</dbReference>
<dbReference type="InterPro" id="IPR001457">
    <property type="entry name" value="NADH_UbQ/plastoQ_OxRdtase_su6"/>
</dbReference>
<dbReference type="PANTHER" id="PTHR11435">
    <property type="entry name" value="NADH UBIQUINONE OXIDOREDUCTASE SUBUNIT ND6"/>
    <property type="match status" value="1"/>
</dbReference>
<dbReference type="PANTHER" id="PTHR11435:SF1">
    <property type="entry name" value="NADH-UBIQUINONE OXIDOREDUCTASE CHAIN 6"/>
    <property type="match status" value="1"/>
</dbReference>
<dbReference type="Pfam" id="PF00499">
    <property type="entry name" value="Oxidored_q3"/>
    <property type="match status" value="1"/>
</dbReference>
<organism>
    <name type="scientific">Myxine glutinosa</name>
    <name type="common">Atlantic hagfish</name>
    <dbReference type="NCBI Taxonomy" id="7769"/>
    <lineage>
        <taxon>Eukaryota</taxon>
        <taxon>Metazoa</taxon>
        <taxon>Chordata</taxon>
        <taxon>Craniata</taxon>
        <taxon>Vertebrata</taxon>
        <taxon>Cyclostomata</taxon>
        <taxon>Myxini</taxon>
        <taxon>Myxiniformes</taxon>
        <taxon>Myxinidae</taxon>
        <taxon>Myxininae</taxon>
        <taxon>Myxine</taxon>
    </lineage>
</organism>
<evidence type="ECO:0000250" key="1"/>
<evidence type="ECO:0000255" key="2"/>
<evidence type="ECO:0000305" key="3"/>
<feature type="chain" id="PRO_0000118306" description="NADH-ubiquinone oxidoreductase chain 6">
    <location>
        <begin position="1"/>
        <end position="167"/>
    </location>
</feature>
<feature type="transmembrane region" description="Helical" evidence="2">
    <location>
        <begin position="24"/>
        <end position="44"/>
    </location>
</feature>
<feature type="transmembrane region" description="Helical" evidence="2">
    <location>
        <begin position="54"/>
        <end position="74"/>
    </location>
</feature>
<feature type="transmembrane region" description="Helical" evidence="2">
    <location>
        <begin position="85"/>
        <end position="105"/>
    </location>
</feature>
<feature type="transmembrane region" description="Helical" evidence="2">
    <location>
        <begin position="135"/>
        <end position="155"/>
    </location>
</feature>
<feature type="sequence conflict" description="In Ref. 1; CAA75491." evidence="3" ref="1">
    <original>Y</original>
    <variation>F</variation>
    <location>
        <position position="101"/>
    </location>
</feature>
<feature type="sequence conflict" description="In Ref. 1; CAA75491." evidence="3" ref="1">
    <original>C</original>
    <variation>G</variation>
    <location>
        <position position="142"/>
    </location>
</feature>
<keyword id="KW-0249">Electron transport</keyword>
<keyword id="KW-0472">Membrane</keyword>
<keyword id="KW-0496">Mitochondrion</keyword>
<keyword id="KW-0520">NAD</keyword>
<keyword id="KW-0679">Respiratory chain</keyword>
<keyword id="KW-1278">Translocase</keyword>
<keyword id="KW-0812">Transmembrane</keyword>
<keyword id="KW-1133">Transmembrane helix</keyword>
<keyword id="KW-0813">Transport</keyword>
<keyword id="KW-0830">Ubiquinone</keyword>
<gene>
    <name type="primary">MT-ND6</name>
    <name type="synonym">MTND6</name>
    <name type="synonym">NADH6</name>
    <name type="synonym">ND6</name>
</gene>
<name>NU6M_MYXGL</name>
<geneLocation type="mitochondrion"/>
<accession>Q9G2W7</accession>
<accession>O63923</accession>
<comment type="function">
    <text evidence="1">Core subunit of the mitochondrial membrane respiratory chain NADH dehydrogenase (Complex I) that is believed to belong to the minimal assembly required for catalysis. Complex I functions in the transfer of electrons from NADH to the respiratory chain. The immediate electron acceptor for the enzyme is believed to be ubiquinone (By similarity).</text>
</comment>
<comment type="catalytic activity">
    <reaction>
        <text>a ubiquinone + NADH + 5 H(+)(in) = a ubiquinol + NAD(+) + 4 H(+)(out)</text>
        <dbReference type="Rhea" id="RHEA:29091"/>
        <dbReference type="Rhea" id="RHEA-COMP:9565"/>
        <dbReference type="Rhea" id="RHEA-COMP:9566"/>
        <dbReference type="ChEBI" id="CHEBI:15378"/>
        <dbReference type="ChEBI" id="CHEBI:16389"/>
        <dbReference type="ChEBI" id="CHEBI:17976"/>
        <dbReference type="ChEBI" id="CHEBI:57540"/>
        <dbReference type="ChEBI" id="CHEBI:57945"/>
        <dbReference type="EC" id="7.1.1.2"/>
    </reaction>
</comment>
<comment type="subcellular location">
    <subcellularLocation>
        <location evidence="3">Mitochondrion membrane</location>
        <topology evidence="3">Multi-pass membrane protein</topology>
    </subcellularLocation>
</comment>
<comment type="similarity">
    <text evidence="3">Belongs to the complex I subunit 6 family.</text>
</comment>
<comment type="sequence caution" evidence="3">
    <conflict type="erroneous initiation">
        <sequence resource="EMBL-CDS" id="CAA75491"/>
    </conflict>
</comment>
<reference key="1">
    <citation type="journal article" date="1998" name="J. Mol. Evol.">
        <title>The mitochondrial DNA molecule of the hagfish (Myxine glutinosa) and vertebrate phylogeny.</title>
        <authorList>
            <person name="Rasmussen A.S."/>
            <person name="Janke A."/>
            <person name="Arnason U."/>
        </authorList>
    </citation>
    <scope>NUCLEOTIDE SEQUENCE [GENOMIC DNA]</scope>
</reference>
<reference key="2">
    <citation type="journal article" date="2001" name="J. Mol. Evol.">
        <title>The complete mitochondrial genome of the hagfish Myxine glutinosa: unique features of the control region.</title>
        <authorList>
            <person name="Delarbre C."/>
            <person name="Rasmussen A.S."/>
            <person name="Arnason U."/>
            <person name="Gachelin G."/>
        </authorList>
    </citation>
    <scope>NUCLEOTIDE SEQUENCE [GENOMIC DNA]</scope>
</reference>
<sequence>MKIMMILEMLFLIGMVILVVDISPYFGALGLIVVSLVGCLIILAKGNSFLSLSLLLIYLGGMMVVFSYCTALVLDLYPTVIVKEVLMKMALGVLVVVFLGYGGYLKADNGVLSMLGEGGVDNSFLGAGVLYGESWLLIVFGCLGLFLALLVILEITKSAERGAYRVI</sequence>
<proteinExistence type="inferred from homology"/>
<protein>
    <recommendedName>
        <fullName>NADH-ubiquinone oxidoreductase chain 6</fullName>
        <ecNumber>7.1.1.2</ecNumber>
    </recommendedName>
    <alternativeName>
        <fullName>NADH dehydrogenase subunit 6</fullName>
    </alternativeName>
</protein>